<sequence length="294" mass="33154">MQNFMVLLLLIVAVVAIMFVLPKNNKTLLHHMRRRRRELKDLLKSKKIIGAKNLMEFVKKYTQIDKTCAYEGPIPMPAEFSTMSADNLQLLDKCGAVRSSLNSWAIATWAENSVVKTMENLQSTMECVNQLNLVPDTYNRFQELVTACFSAVPPPPPKNPNNISNLPIGVYGSPYGIYGMNYNLGTSYQGVTNGFVSDSRGWRPDDYFNYNAQGSELIDGTNTLMTAQMLQQYELPRIGFGPYMSRSEIDAEVLPKYEPSQWIVNNGPVRPWEPKYPIMTIPPTPIPLLGTSNM</sequence>
<protein>
    <recommendedName>
        <fullName>Uncharacterized protein 457L</fullName>
    </recommendedName>
</protein>
<accession>Q91F69</accession>
<proteinExistence type="inferred from homology"/>
<feature type="signal peptide" evidence="1">
    <location>
        <begin position="1"/>
        <end position="16"/>
    </location>
</feature>
<feature type="chain" id="PRO_0000377894" description="Uncharacterized protein 457L">
    <location>
        <begin position="17"/>
        <end position="294"/>
    </location>
</feature>
<feature type="glycosylation site" description="N-linked (GlcNAc...) asparagine; by host" evidence="1">
    <location>
        <position position="25"/>
    </location>
</feature>
<feature type="glycosylation site" description="N-linked (GlcNAc...) asparagine; by host" evidence="1">
    <location>
        <position position="162"/>
    </location>
</feature>
<gene>
    <name type="ORF">IIV6-457L</name>
</gene>
<organismHost>
    <name type="scientific">Acheta domesticus</name>
    <name type="common">House cricket</name>
    <dbReference type="NCBI Taxonomy" id="6997"/>
</organismHost>
<organismHost>
    <name type="scientific">Chilo suppressalis</name>
    <name type="common">Asiatic rice borer moth</name>
    <dbReference type="NCBI Taxonomy" id="168631"/>
</organismHost>
<organismHost>
    <name type="scientific">Gryllus bimaculatus</name>
    <name type="common">Two-spotted cricket</name>
    <dbReference type="NCBI Taxonomy" id="6999"/>
</organismHost>
<organismHost>
    <name type="scientific">Gryllus campestris</name>
    <dbReference type="NCBI Taxonomy" id="58607"/>
</organismHost>
<organismHost>
    <name type="scientific">Spodoptera frugiperda</name>
    <name type="common">Fall armyworm</name>
    <dbReference type="NCBI Taxonomy" id="7108"/>
</organismHost>
<organism>
    <name type="scientific">Invertebrate iridescent virus 6</name>
    <name type="common">IIV-6</name>
    <name type="synonym">Chilo iridescent virus</name>
    <dbReference type="NCBI Taxonomy" id="176652"/>
    <lineage>
        <taxon>Viruses</taxon>
        <taxon>Varidnaviria</taxon>
        <taxon>Bamfordvirae</taxon>
        <taxon>Nucleocytoviricota</taxon>
        <taxon>Megaviricetes</taxon>
        <taxon>Pimascovirales</taxon>
        <taxon>Iridoviridae</taxon>
        <taxon>Betairidovirinae</taxon>
        <taxon>Iridovirus</taxon>
    </lineage>
</organism>
<evidence type="ECO:0000255" key="1"/>
<name>457L_IIV6</name>
<keyword id="KW-0325">Glycoprotein</keyword>
<keyword id="KW-1185">Reference proteome</keyword>
<keyword id="KW-0732">Signal</keyword>
<reference key="1">
    <citation type="journal article" date="2001" name="Virology">
        <title>Analysis of the first complete DNA sequence of an invertebrate iridovirus: coding strategy of the genome of Chilo iridescent virus.</title>
        <authorList>
            <person name="Jakob N.J."/>
            <person name="Mueller K."/>
            <person name="Bahr U."/>
            <person name="Darai G."/>
        </authorList>
    </citation>
    <scope>NUCLEOTIDE SEQUENCE [LARGE SCALE GENOMIC DNA]</scope>
</reference>
<reference key="2">
    <citation type="journal article" date="2007" name="Virol. J.">
        <title>Comparative genomic analysis of the family Iridoviridae: re-annotating and defining the core set of iridovirus genes.</title>
        <authorList>
            <person name="Eaton H.E."/>
            <person name="Metcalf J."/>
            <person name="Penny E."/>
            <person name="Tcherepanov V."/>
            <person name="Upton C."/>
            <person name="Brunetti C.R."/>
        </authorList>
    </citation>
    <scope>GENOME REANNOTATION</scope>
</reference>
<dbReference type="EMBL" id="AF303741">
    <property type="protein sequence ID" value="AAK82317.1"/>
    <property type="molecule type" value="Genomic_DNA"/>
</dbReference>
<dbReference type="RefSeq" id="NP_149920.1">
    <property type="nucleotide sequence ID" value="NC_003038.1"/>
</dbReference>
<dbReference type="SMR" id="Q91F69"/>
<dbReference type="KEGG" id="vg:1733335"/>
<dbReference type="OrthoDB" id="33032at10239"/>
<dbReference type="Proteomes" id="UP000001359">
    <property type="component" value="Genome"/>
</dbReference>